<feature type="chain" id="PRO_0000180072" description="GTPase Era">
    <location>
        <begin position="1"/>
        <end position="320"/>
    </location>
</feature>
<feature type="domain" description="Era-type G" evidence="2">
    <location>
        <begin position="25"/>
        <end position="193"/>
    </location>
</feature>
<feature type="domain" description="KH type-2" evidence="1">
    <location>
        <begin position="216"/>
        <end position="302"/>
    </location>
</feature>
<feature type="region of interest" description="G1" evidence="2">
    <location>
        <begin position="33"/>
        <end position="40"/>
    </location>
</feature>
<feature type="region of interest" description="G2" evidence="2">
    <location>
        <begin position="59"/>
        <end position="63"/>
    </location>
</feature>
<feature type="region of interest" description="G3" evidence="2">
    <location>
        <begin position="80"/>
        <end position="83"/>
    </location>
</feature>
<feature type="region of interest" description="G4" evidence="2">
    <location>
        <begin position="142"/>
        <end position="145"/>
    </location>
</feature>
<feature type="region of interest" description="G5" evidence="2">
    <location>
        <begin position="172"/>
        <end position="174"/>
    </location>
</feature>
<feature type="binding site" evidence="1">
    <location>
        <begin position="33"/>
        <end position="40"/>
    </location>
    <ligand>
        <name>GTP</name>
        <dbReference type="ChEBI" id="CHEBI:37565"/>
    </ligand>
</feature>
<feature type="binding site" evidence="1">
    <location>
        <begin position="80"/>
        <end position="84"/>
    </location>
    <ligand>
        <name>GTP</name>
        <dbReference type="ChEBI" id="CHEBI:37565"/>
    </ligand>
</feature>
<feature type="binding site" evidence="1">
    <location>
        <begin position="142"/>
        <end position="145"/>
    </location>
    <ligand>
        <name>GTP</name>
        <dbReference type="ChEBI" id="CHEBI:37565"/>
    </ligand>
</feature>
<sequence>MADNEFDIDAFFSTEKKSTSSENQHCGFIAIVGRPNVGKSTLLNKILGQKISITSRKPQTTRHRIMGVDTDGDYQAIYVDTPGLHIEEKRAINRLMNRAANSSLSDVNLVFFLVDGTHWTNDDEMVLNKLQKANFPVVLCVNKVDNVQDRNEVMQHMMEMSKKMNFVDVVPISAKQGKNIDVLRKHVRDHLPKAVHHFPEEYVTDRSQRFMASEIVREKLMRFTGDELPYSVTVEIERFDYNPETDGFHINALILVERSGQKKMVIGKGGEKIKTIGREARLDMEELFGRKVYLETWVKVKSGWADDERALRSLGYIDDL</sequence>
<comment type="function">
    <text evidence="1">An essential GTPase that binds both GDP and GTP, with rapid nucleotide exchange. Plays a role in 16S rRNA processing and 30S ribosomal subunit biogenesis and possibly also in cell cycle regulation and energy metabolism.</text>
</comment>
<comment type="subunit">
    <text evidence="1">Monomer.</text>
</comment>
<comment type="subcellular location">
    <subcellularLocation>
        <location>Cytoplasm</location>
    </subcellularLocation>
    <subcellularLocation>
        <location evidence="1">Cell inner membrane</location>
        <topology evidence="1">Peripheral membrane protein</topology>
    </subcellularLocation>
</comment>
<comment type="similarity">
    <text evidence="1 2">Belongs to the TRAFAC class TrmE-Era-EngA-EngB-Septin-like GTPase superfamily. Era GTPase family.</text>
</comment>
<proteinExistence type="inferred from homology"/>
<organism>
    <name type="scientific">Vibrio vulnificus (strain CMCP6)</name>
    <dbReference type="NCBI Taxonomy" id="216895"/>
    <lineage>
        <taxon>Bacteria</taxon>
        <taxon>Pseudomonadati</taxon>
        <taxon>Pseudomonadota</taxon>
        <taxon>Gammaproteobacteria</taxon>
        <taxon>Vibrionales</taxon>
        <taxon>Vibrionaceae</taxon>
        <taxon>Vibrio</taxon>
    </lineage>
</organism>
<evidence type="ECO:0000255" key="1">
    <source>
        <dbReference type="HAMAP-Rule" id="MF_00367"/>
    </source>
</evidence>
<evidence type="ECO:0000255" key="2">
    <source>
        <dbReference type="PROSITE-ProRule" id="PRU01050"/>
    </source>
</evidence>
<accession>Q8DC75</accession>
<reference key="1">
    <citation type="submission" date="2002-12" db="EMBL/GenBank/DDBJ databases">
        <title>Complete genome sequence of Vibrio vulnificus CMCP6.</title>
        <authorList>
            <person name="Rhee J.H."/>
            <person name="Kim S.Y."/>
            <person name="Chung S.S."/>
            <person name="Kim J.J."/>
            <person name="Moon Y.H."/>
            <person name="Jeong H."/>
            <person name="Choy H.E."/>
        </authorList>
    </citation>
    <scope>NUCLEOTIDE SEQUENCE [LARGE SCALE GENOMIC DNA]</scope>
    <source>
        <strain>CMCP6</strain>
    </source>
</reference>
<protein>
    <recommendedName>
        <fullName evidence="1">GTPase Era</fullName>
    </recommendedName>
</protein>
<gene>
    <name evidence="1" type="primary">era</name>
    <name type="ordered locus">VV1_1566</name>
</gene>
<keyword id="KW-0997">Cell inner membrane</keyword>
<keyword id="KW-1003">Cell membrane</keyword>
<keyword id="KW-0963">Cytoplasm</keyword>
<keyword id="KW-0342">GTP-binding</keyword>
<keyword id="KW-0472">Membrane</keyword>
<keyword id="KW-0547">Nucleotide-binding</keyword>
<keyword id="KW-0690">Ribosome biogenesis</keyword>
<keyword id="KW-0694">RNA-binding</keyword>
<keyword id="KW-0699">rRNA-binding</keyword>
<name>ERA_VIBVU</name>
<dbReference type="EMBL" id="AE016795">
    <property type="protein sequence ID" value="AAO09990.1"/>
    <property type="molecule type" value="Genomic_DNA"/>
</dbReference>
<dbReference type="RefSeq" id="WP_011079501.1">
    <property type="nucleotide sequence ID" value="NC_004459.3"/>
</dbReference>
<dbReference type="SMR" id="Q8DC75"/>
<dbReference type="GeneID" id="93895823"/>
<dbReference type="KEGG" id="vvu:VV1_1566"/>
<dbReference type="HOGENOM" id="CLU_038009_1_2_6"/>
<dbReference type="Proteomes" id="UP000002275">
    <property type="component" value="Chromosome 1"/>
</dbReference>
<dbReference type="GO" id="GO:0005829">
    <property type="term" value="C:cytosol"/>
    <property type="evidence" value="ECO:0007669"/>
    <property type="project" value="TreeGrafter"/>
</dbReference>
<dbReference type="GO" id="GO:0005886">
    <property type="term" value="C:plasma membrane"/>
    <property type="evidence" value="ECO:0007669"/>
    <property type="project" value="UniProtKB-SubCell"/>
</dbReference>
<dbReference type="GO" id="GO:0005525">
    <property type="term" value="F:GTP binding"/>
    <property type="evidence" value="ECO:0007669"/>
    <property type="project" value="UniProtKB-UniRule"/>
</dbReference>
<dbReference type="GO" id="GO:0003924">
    <property type="term" value="F:GTPase activity"/>
    <property type="evidence" value="ECO:0007669"/>
    <property type="project" value="UniProtKB-UniRule"/>
</dbReference>
<dbReference type="GO" id="GO:0043024">
    <property type="term" value="F:ribosomal small subunit binding"/>
    <property type="evidence" value="ECO:0007669"/>
    <property type="project" value="TreeGrafter"/>
</dbReference>
<dbReference type="GO" id="GO:0070181">
    <property type="term" value="F:small ribosomal subunit rRNA binding"/>
    <property type="evidence" value="ECO:0007669"/>
    <property type="project" value="UniProtKB-UniRule"/>
</dbReference>
<dbReference type="GO" id="GO:0000028">
    <property type="term" value="P:ribosomal small subunit assembly"/>
    <property type="evidence" value="ECO:0007669"/>
    <property type="project" value="TreeGrafter"/>
</dbReference>
<dbReference type="CDD" id="cd04163">
    <property type="entry name" value="Era"/>
    <property type="match status" value="1"/>
</dbReference>
<dbReference type="CDD" id="cd22534">
    <property type="entry name" value="KH-II_Era"/>
    <property type="match status" value="1"/>
</dbReference>
<dbReference type="FunFam" id="3.30.300.20:FF:000003">
    <property type="entry name" value="GTPase Era"/>
    <property type="match status" value="1"/>
</dbReference>
<dbReference type="FunFam" id="3.40.50.300:FF:000094">
    <property type="entry name" value="GTPase Era"/>
    <property type="match status" value="1"/>
</dbReference>
<dbReference type="Gene3D" id="3.30.300.20">
    <property type="match status" value="1"/>
</dbReference>
<dbReference type="Gene3D" id="3.40.50.300">
    <property type="entry name" value="P-loop containing nucleotide triphosphate hydrolases"/>
    <property type="match status" value="1"/>
</dbReference>
<dbReference type="HAMAP" id="MF_00367">
    <property type="entry name" value="GTPase_Era"/>
    <property type="match status" value="1"/>
</dbReference>
<dbReference type="InterPro" id="IPR030388">
    <property type="entry name" value="G_ERA_dom"/>
</dbReference>
<dbReference type="InterPro" id="IPR006073">
    <property type="entry name" value="GTP-bd"/>
</dbReference>
<dbReference type="InterPro" id="IPR005662">
    <property type="entry name" value="GTPase_Era-like"/>
</dbReference>
<dbReference type="InterPro" id="IPR015946">
    <property type="entry name" value="KH_dom-like_a/b"/>
</dbReference>
<dbReference type="InterPro" id="IPR004044">
    <property type="entry name" value="KH_dom_type_2"/>
</dbReference>
<dbReference type="InterPro" id="IPR009019">
    <property type="entry name" value="KH_sf_prok-type"/>
</dbReference>
<dbReference type="InterPro" id="IPR027417">
    <property type="entry name" value="P-loop_NTPase"/>
</dbReference>
<dbReference type="InterPro" id="IPR005225">
    <property type="entry name" value="Small_GTP-bd"/>
</dbReference>
<dbReference type="NCBIfam" id="TIGR00436">
    <property type="entry name" value="era"/>
    <property type="match status" value="1"/>
</dbReference>
<dbReference type="NCBIfam" id="NF000908">
    <property type="entry name" value="PRK00089.1"/>
    <property type="match status" value="1"/>
</dbReference>
<dbReference type="NCBIfam" id="TIGR00231">
    <property type="entry name" value="small_GTP"/>
    <property type="match status" value="1"/>
</dbReference>
<dbReference type="PANTHER" id="PTHR42698">
    <property type="entry name" value="GTPASE ERA"/>
    <property type="match status" value="1"/>
</dbReference>
<dbReference type="PANTHER" id="PTHR42698:SF1">
    <property type="entry name" value="GTPASE ERA, MITOCHONDRIAL"/>
    <property type="match status" value="1"/>
</dbReference>
<dbReference type="Pfam" id="PF07650">
    <property type="entry name" value="KH_2"/>
    <property type="match status" value="1"/>
</dbReference>
<dbReference type="Pfam" id="PF01926">
    <property type="entry name" value="MMR_HSR1"/>
    <property type="match status" value="1"/>
</dbReference>
<dbReference type="SUPFAM" id="SSF52540">
    <property type="entry name" value="P-loop containing nucleoside triphosphate hydrolases"/>
    <property type="match status" value="1"/>
</dbReference>
<dbReference type="SUPFAM" id="SSF54814">
    <property type="entry name" value="Prokaryotic type KH domain (KH-domain type II)"/>
    <property type="match status" value="1"/>
</dbReference>
<dbReference type="PROSITE" id="PS51713">
    <property type="entry name" value="G_ERA"/>
    <property type="match status" value="1"/>
</dbReference>
<dbReference type="PROSITE" id="PS50823">
    <property type="entry name" value="KH_TYPE_2"/>
    <property type="match status" value="1"/>
</dbReference>